<name>SYDP_SHIFL</name>
<reference key="1">
    <citation type="journal article" date="2002" name="Nucleic Acids Res.">
        <title>Genome sequence of Shigella flexneri 2a: insights into pathogenicity through comparison with genomes of Escherichia coli K12 and O157.</title>
        <authorList>
            <person name="Jin Q."/>
            <person name="Yuan Z."/>
            <person name="Xu J."/>
            <person name="Wang Y."/>
            <person name="Shen Y."/>
            <person name="Lu W."/>
            <person name="Wang J."/>
            <person name="Liu H."/>
            <person name="Yang J."/>
            <person name="Yang F."/>
            <person name="Zhang X."/>
            <person name="Zhang J."/>
            <person name="Yang G."/>
            <person name="Wu H."/>
            <person name="Qu D."/>
            <person name="Dong J."/>
            <person name="Sun L."/>
            <person name="Xue Y."/>
            <person name="Zhao A."/>
            <person name="Gao Y."/>
            <person name="Zhu J."/>
            <person name="Kan B."/>
            <person name="Ding K."/>
            <person name="Chen S."/>
            <person name="Cheng H."/>
            <person name="Yao Z."/>
            <person name="He B."/>
            <person name="Chen R."/>
            <person name="Ma D."/>
            <person name="Qiang B."/>
            <person name="Wen Y."/>
            <person name="Hou Y."/>
            <person name="Yu J."/>
        </authorList>
    </citation>
    <scope>NUCLEOTIDE SEQUENCE [LARGE SCALE GENOMIC DNA]</scope>
    <source>
        <strain>301 / Serotype 2a</strain>
    </source>
</reference>
<reference key="2">
    <citation type="journal article" date="2003" name="Infect. Immun.">
        <title>Complete genome sequence and comparative genomics of Shigella flexneri serotype 2a strain 2457T.</title>
        <authorList>
            <person name="Wei J."/>
            <person name="Goldberg M.B."/>
            <person name="Burland V."/>
            <person name="Venkatesan M.M."/>
            <person name="Deng W."/>
            <person name="Fournier G."/>
            <person name="Mayhew G.F."/>
            <person name="Plunkett G. III"/>
            <person name="Rose D.J."/>
            <person name="Darling A."/>
            <person name="Mau B."/>
            <person name="Perna N.T."/>
            <person name="Payne S.M."/>
            <person name="Runyen-Janecky L.J."/>
            <person name="Zhou S."/>
            <person name="Schwartz D.C."/>
            <person name="Blattner F.R."/>
        </authorList>
    </citation>
    <scope>NUCLEOTIDE SEQUENCE [LARGE SCALE GENOMIC DNA]</scope>
    <source>
        <strain>ATCC 700930 / 2457T / Serotype 2a</strain>
    </source>
</reference>
<feature type="chain" id="PRO_0000214145" description="Protein Syd">
    <location>
        <begin position="1"/>
        <end position="181"/>
    </location>
</feature>
<proteinExistence type="inferred from homology"/>
<protein>
    <recommendedName>
        <fullName evidence="1">Protein Syd</fullName>
    </recommendedName>
</protein>
<evidence type="ECO:0000255" key="1">
    <source>
        <dbReference type="HAMAP-Rule" id="MF_01104"/>
    </source>
</evidence>
<sequence>MDDLTAQALKDFTARYCDAWHEEHKSWPLSEELYGVPSPCIISTTEDAVYWQPQPFTGEQNVNAVERAFDIVIQPTIHTFYTTQFAGDMHAQFGDIKLTLLQTWSEDDFRRVQENLIGHLVTQKRLKLPPTLFIATLEEELEVISVCNLSGEVCKETLGTRKRTNLASNLAEFLNQLKPLL</sequence>
<organism>
    <name type="scientific">Shigella flexneri</name>
    <dbReference type="NCBI Taxonomy" id="623"/>
    <lineage>
        <taxon>Bacteria</taxon>
        <taxon>Pseudomonadati</taxon>
        <taxon>Pseudomonadota</taxon>
        <taxon>Gammaproteobacteria</taxon>
        <taxon>Enterobacterales</taxon>
        <taxon>Enterobacteriaceae</taxon>
        <taxon>Shigella</taxon>
    </lineage>
</organism>
<dbReference type="EMBL" id="AE005674">
    <property type="protein sequence ID" value="AAN44294.1"/>
    <property type="molecule type" value="Genomic_DNA"/>
</dbReference>
<dbReference type="EMBL" id="AE014073">
    <property type="protein sequence ID" value="AAP18119.1"/>
    <property type="molecule type" value="Genomic_DNA"/>
</dbReference>
<dbReference type="RefSeq" id="NP_708587.1">
    <property type="nucleotide sequence ID" value="NC_004337.2"/>
</dbReference>
<dbReference type="RefSeq" id="WP_000342432.1">
    <property type="nucleotide sequence ID" value="NZ_WPGW01000063.1"/>
</dbReference>
<dbReference type="SMR" id="Q83QD1"/>
<dbReference type="STRING" id="198214.SF2806"/>
<dbReference type="PaxDb" id="198214-SF2806"/>
<dbReference type="GeneID" id="1026928"/>
<dbReference type="KEGG" id="sfl:SF2806"/>
<dbReference type="KEGG" id="sfx:S3001"/>
<dbReference type="PATRIC" id="fig|198214.7.peg.3340"/>
<dbReference type="HOGENOM" id="CLU_121866_0_0_6"/>
<dbReference type="Proteomes" id="UP000001006">
    <property type="component" value="Chromosome"/>
</dbReference>
<dbReference type="Proteomes" id="UP000002673">
    <property type="component" value="Chromosome"/>
</dbReference>
<dbReference type="GO" id="GO:0009898">
    <property type="term" value="C:cytoplasmic side of plasma membrane"/>
    <property type="evidence" value="ECO:0007669"/>
    <property type="project" value="InterPro"/>
</dbReference>
<dbReference type="CDD" id="cd16323">
    <property type="entry name" value="Syd"/>
    <property type="match status" value="1"/>
</dbReference>
<dbReference type="FunFam" id="3.40.1580.20:FF:000001">
    <property type="entry name" value="Protein Syd"/>
    <property type="match status" value="1"/>
</dbReference>
<dbReference type="Gene3D" id="3.40.1580.20">
    <property type="entry name" value="Syd protein"/>
    <property type="match status" value="1"/>
</dbReference>
<dbReference type="HAMAP" id="MF_01104">
    <property type="entry name" value="Syd"/>
    <property type="match status" value="1"/>
</dbReference>
<dbReference type="InterPro" id="IPR009948">
    <property type="entry name" value="Syd"/>
</dbReference>
<dbReference type="InterPro" id="IPR038228">
    <property type="entry name" value="Syd_sf"/>
</dbReference>
<dbReference type="NCBIfam" id="NF003439">
    <property type="entry name" value="PRK04968.1"/>
    <property type="match status" value="1"/>
</dbReference>
<dbReference type="Pfam" id="PF07348">
    <property type="entry name" value="Syd"/>
    <property type="match status" value="1"/>
</dbReference>
<gene>
    <name evidence="1" type="primary">syd</name>
    <name type="ordered locus">SF2806</name>
    <name type="ordered locus">S3001</name>
</gene>
<comment type="function">
    <text evidence="1">Interacts with the SecY protein in vivo. May bind preferentially to an uncomplexed state of SecY, thus functioning either as a chelating agent for excess SecY in the cell or as a regulatory factor that negatively controls the translocase function.</text>
</comment>
<comment type="subcellular location">
    <subcellularLocation>
        <location evidence="1">Cell inner membrane</location>
        <topology evidence="1">Peripheral membrane protein</topology>
        <orientation evidence="1">Cytoplasmic side</orientation>
    </subcellularLocation>
    <text evidence="1">Loosely associated with the cytoplasmic side of the inner membrane, probably via SecY.</text>
</comment>
<comment type="similarity">
    <text evidence="1">Belongs to the Syd family.</text>
</comment>
<keyword id="KW-0997">Cell inner membrane</keyword>
<keyword id="KW-1003">Cell membrane</keyword>
<keyword id="KW-0472">Membrane</keyword>
<keyword id="KW-1185">Reference proteome</keyword>
<accession>Q83QD1</accession>